<gene>
    <name type="ordered locus">BC_0880</name>
</gene>
<evidence type="ECO:0000255" key="1">
    <source>
        <dbReference type="HAMAP-Rule" id="MF_01526"/>
    </source>
</evidence>
<dbReference type="EMBL" id="AE016877">
    <property type="protein sequence ID" value="AAP07867.1"/>
    <property type="molecule type" value="Genomic_DNA"/>
</dbReference>
<dbReference type="RefSeq" id="NP_830666.1">
    <property type="nucleotide sequence ID" value="NC_004722.1"/>
</dbReference>
<dbReference type="RefSeq" id="WP_000164614.1">
    <property type="nucleotide sequence ID" value="NZ_CP138336.1"/>
</dbReference>
<dbReference type="SMR" id="Q81HD5"/>
<dbReference type="STRING" id="226900.BC_0880"/>
<dbReference type="KEGG" id="bce:BC0880"/>
<dbReference type="PATRIC" id="fig|226900.8.peg.824"/>
<dbReference type="HOGENOM" id="CLU_140243_3_0_9"/>
<dbReference type="OrthoDB" id="9811402at2"/>
<dbReference type="Proteomes" id="UP000001417">
    <property type="component" value="Chromosome"/>
</dbReference>
<dbReference type="Gene3D" id="1.20.1500.10">
    <property type="entry name" value="YheA/YmcA-like"/>
    <property type="match status" value="1"/>
</dbReference>
<dbReference type="HAMAP" id="MF_01526">
    <property type="entry name" value="UPF0342"/>
    <property type="match status" value="1"/>
</dbReference>
<dbReference type="InterPro" id="IPR010368">
    <property type="entry name" value="Com_YlbF"/>
</dbReference>
<dbReference type="InterPro" id="IPR023378">
    <property type="entry name" value="YheA/YmcA-like_dom_sf"/>
</dbReference>
<dbReference type="NCBIfam" id="NF010211">
    <property type="entry name" value="PRK13676.1-4"/>
    <property type="match status" value="1"/>
</dbReference>
<dbReference type="Pfam" id="PF06133">
    <property type="entry name" value="Com_YlbF"/>
    <property type="match status" value="1"/>
</dbReference>
<dbReference type="SUPFAM" id="SSF158622">
    <property type="entry name" value="YheA/YmcA-like"/>
    <property type="match status" value="1"/>
</dbReference>
<sequence length="118" mass="13580">MTKNIHDVAYELQKAIAENEDFKTLKESYAAVQADTASKNLFDEFRTMQLSLQQKMMQGQEITEEDNQQAQEVVARIQQDAKITKLMETEQRLNVVIGDVNKIIMKPLEELYSAQQQA</sequence>
<accession>Q81HD5</accession>
<comment type="similarity">
    <text evidence="1">Belongs to the UPF0342 family.</text>
</comment>
<organism>
    <name type="scientific">Bacillus cereus (strain ATCC 14579 / DSM 31 / CCUG 7414 / JCM 2152 / NBRC 15305 / NCIMB 9373 / NCTC 2599 / NRRL B-3711)</name>
    <dbReference type="NCBI Taxonomy" id="226900"/>
    <lineage>
        <taxon>Bacteria</taxon>
        <taxon>Bacillati</taxon>
        <taxon>Bacillota</taxon>
        <taxon>Bacilli</taxon>
        <taxon>Bacillales</taxon>
        <taxon>Bacillaceae</taxon>
        <taxon>Bacillus</taxon>
        <taxon>Bacillus cereus group</taxon>
    </lineage>
</organism>
<reference key="1">
    <citation type="journal article" date="2003" name="Nature">
        <title>Genome sequence of Bacillus cereus and comparative analysis with Bacillus anthracis.</title>
        <authorList>
            <person name="Ivanova N."/>
            <person name="Sorokin A."/>
            <person name="Anderson I."/>
            <person name="Galleron N."/>
            <person name="Candelon B."/>
            <person name="Kapatral V."/>
            <person name="Bhattacharyya A."/>
            <person name="Reznik G."/>
            <person name="Mikhailova N."/>
            <person name="Lapidus A."/>
            <person name="Chu L."/>
            <person name="Mazur M."/>
            <person name="Goltsman E."/>
            <person name="Larsen N."/>
            <person name="D'Souza M."/>
            <person name="Walunas T."/>
            <person name="Grechkin Y."/>
            <person name="Pusch G."/>
            <person name="Haselkorn R."/>
            <person name="Fonstein M."/>
            <person name="Ehrlich S.D."/>
            <person name="Overbeek R."/>
            <person name="Kyrpides N.C."/>
        </authorList>
    </citation>
    <scope>NUCLEOTIDE SEQUENCE [LARGE SCALE GENOMIC DNA]</scope>
    <source>
        <strain>ATCC 14579 / DSM 31 / CCUG 7414 / JCM 2152 / NBRC 15305 / NCIMB 9373 / NCTC 2599 / NRRL B-3711</strain>
    </source>
</reference>
<name>Y880_BACCR</name>
<keyword id="KW-1185">Reference proteome</keyword>
<proteinExistence type="inferred from homology"/>
<feature type="chain" id="PRO_0000109965" description="UPF0342 protein BC_0880">
    <location>
        <begin position="1"/>
        <end position="118"/>
    </location>
</feature>
<protein>
    <recommendedName>
        <fullName evidence="1">UPF0342 protein BC_0880</fullName>
    </recommendedName>
</protein>